<name>SYC_PHOLL</name>
<keyword id="KW-0030">Aminoacyl-tRNA synthetase</keyword>
<keyword id="KW-0067">ATP-binding</keyword>
<keyword id="KW-0963">Cytoplasm</keyword>
<keyword id="KW-0436">Ligase</keyword>
<keyword id="KW-0479">Metal-binding</keyword>
<keyword id="KW-0547">Nucleotide-binding</keyword>
<keyword id="KW-0648">Protein biosynthesis</keyword>
<keyword id="KW-1185">Reference proteome</keyword>
<keyword id="KW-0862">Zinc</keyword>
<feature type="chain" id="PRO_0000159452" description="Cysteine--tRNA ligase">
    <location>
        <begin position="1"/>
        <end position="461"/>
    </location>
</feature>
<feature type="short sequence motif" description="'HIGH' region">
    <location>
        <begin position="30"/>
        <end position="40"/>
    </location>
</feature>
<feature type="short sequence motif" description="'KMSKS' region">
    <location>
        <begin position="266"/>
        <end position="270"/>
    </location>
</feature>
<feature type="binding site" evidence="1">
    <location>
        <position position="28"/>
    </location>
    <ligand>
        <name>Zn(2+)</name>
        <dbReference type="ChEBI" id="CHEBI:29105"/>
    </ligand>
</feature>
<feature type="binding site" evidence="1">
    <location>
        <position position="209"/>
    </location>
    <ligand>
        <name>Zn(2+)</name>
        <dbReference type="ChEBI" id="CHEBI:29105"/>
    </ligand>
</feature>
<feature type="binding site" evidence="1">
    <location>
        <position position="234"/>
    </location>
    <ligand>
        <name>Zn(2+)</name>
        <dbReference type="ChEBI" id="CHEBI:29105"/>
    </ligand>
</feature>
<feature type="binding site" evidence="1">
    <location>
        <position position="238"/>
    </location>
    <ligand>
        <name>Zn(2+)</name>
        <dbReference type="ChEBI" id="CHEBI:29105"/>
    </ligand>
</feature>
<feature type="binding site" evidence="1">
    <location>
        <position position="269"/>
    </location>
    <ligand>
        <name>ATP</name>
        <dbReference type="ChEBI" id="CHEBI:30616"/>
    </ligand>
</feature>
<accession>Q7N0S5</accession>
<dbReference type="EC" id="6.1.1.16" evidence="1"/>
<dbReference type="EMBL" id="BX571871">
    <property type="protein sequence ID" value="CAE16176.1"/>
    <property type="molecule type" value="Genomic_DNA"/>
</dbReference>
<dbReference type="RefSeq" id="WP_011147945.1">
    <property type="nucleotide sequence ID" value="NC_005126.1"/>
</dbReference>
<dbReference type="SMR" id="Q7N0S5"/>
<dbReference type="STRING" id="243265.plu3804"/>
<dbReference type="GeneID" id="48850035"/>
<dbReference type="KEGG" id="plu:plu3804"/>
<dbReference type="eggNOG" id="COG0215">
    <property type="taxonomic scope" value="Bacteria"/>
</dbReference>
<dbReference type="HOGENOM" id="CLU_013528_0_1_6"/>
<dbReference type="OrthoDB" id="9815130at2"/>
<dbReference type="Proteomes" id="UP000002514">
    <property type="component" value="Chromosome"/>
</dbReference>
<dbReference type="GO" id="GO:0005829">
    <property type="term" value="C:cytosol"/>
    <property type="evidence" value="ECO:0007669"/>
    <property type="project" value="TreeGrafter"/>
</dbReference>
<dbReference type="GO" id="GO:0005524">
    <property type="term" value="F:ATP binding"/>
    <property type="evidence" value="ECO:0007669"/>
    <property type="project" value="UniProtKB-UniRule"/>
</dbReference>
<dbReference type="GO" id="GO:0004817">
    <property type="term" value="F:cysteine-tRNA ligase activity"/>
    <property type="evidence" value="ECO:0007669"/>
    <property type="project" value="UniProtKB-UniRule"/>
</dbReference>
<dbReference type="GO" id="GO:0008270">
    <property type="term" value="F:zinc ion binding"/>
    <property type="evidence" value="ECO:0007669"/>
    <property type="project" value="UniProtKB-UniRule"/>
</dbReference>
<dbReference type="GO" id="GO:0006423">
    <property type="term" value="P:cysteinyl-tRNA aminoacylation"/>
    <property type="evidence" value="ECO:0007669"/>
    <property type="project" value="UniProtKB-UniRule"/>
</dbReference>
<dbReference type="CDD" id="cd07963">
    <property type="entry name" value="Anticodon_Ia_Cys"/>
    <property type="match status" value="1"/>
</dbReference>
<dbReference type="CDD" id="cd00672">
    <property type="entry name" value="CysRS_core"/>
    <property type="match status" value="1"/>
</dbReference>
<dbReference type="FunFam" id="1.20.120.1910:FF:000001">
    <property type="entry name" value="Cysteine--tRNA ligase"/>
    <property type="match status" value="1"/>
</dbReference>
<dbReference type="FunFam" id="3.40.50.620:FF:000009">
    <property type="entry name" value="Cysteine--tRNA ligase"/>
    <property type="match status" value="1"/>
</dbReference>
<dbReference type="Gene3D" id="1.20.120.1910">
    <property type="entry name" value="Cysteine-tRNA ligase, C-terminal anti-codon recognition domain"/>
    <property type="match status" value="1"/>
</dbReference>
<dbReference type="Gene3D" id="3.40.50.620">
    <property type="entry name" value="HUPs"/>
    <property type="match status" value="1"/>
</dbReference>
<dbReference type="HAMAP" id="MF_00041">
    <property type="entry name" value="Cys_tRNA_synth"/>
    <property type="match status" value="1"/>
</dbReference>
<dbReference type="InterPro" id="IPR015803">
    <property type="entry name" value="Cys-tRNA-ligase"/>
</dbReference>
<dbReference type="InterPro" id="IPR015273">
    <property type="entry name" value="Cys-tRNA-synt_Ia_DALR"/>
</dbReference>
<dbReference type="InterPro" id="IPR024909">
    <property type="entry name" value="Cys-tRNA/MSH_ligase"/>
</dbReference>
<dbReference type="InterPro" id="IPR056411">
    <property type="entry name" value="CysS_C"/>
</dbReference>
<dbReference type="InterPro" id="IPR014729">
    <property type="entry name" value="Rossmann-like_a/b/a_fold"/>
</dbReference>
<dbReference type="InterPro" id="IPR032678">
    <property type="entry name" value="tRNA-synt_1_cat_dom"/>
</dbReference>
<dbReference type="InterPro" id="IPR009080">
    <property type="entry name" value="tRNAsynth_Ia_anticodon-bd"/>
</dbReference>
<dbReference type="NCBIfam" id="TIGR00435">
    <property type="entry name" value="cysS"/>
    <property type="match status" value="1"/>
</dbReference>
<dbReference type="PANTHER" id="PTHR10890:SF3">
    <property type="entry name" value="CYSTEINE--TRNA LIGASE, CYTOPLASMIC"/>
    <property type="match status" value="1"/>
</dbReference>
<dbReference type="PANTHER" id="PTHR10890">
    <property type="entry name" value="CYSTEINYL-TRNA SYNTHETASE"/>
    <property type="match status" value="1"/>
</dbReference>
<dbReference type="Pfam" id="PF23493">
    <property type="entry name" value="CysS_C"/>
    <property type="match status" value="1"/>
</dbReference>
<dbReference type="Pfam" id="PF09190">
    <property type="entry name" value="DALR_2"/>
    <property type="match status" value="1"/>
</dbReference>
<dbReference type="Pfam" id="PF01406">
    <property type="entry name" value="tRNA-synt_1e"/>
    <property type="match status" value="1"/>
</dbReference>
<dbReference type="PRINTS" id="PR00983">
    <property type="entry name" value="TRNASYNTHCYS"/>
</dbReference>
<dbReference type="SMART" id="SM00840">
    <property type="entry name" value="DALR_2"/>
    <property type="match status" value="1"/>
</dbReference>
<dbReference type="SUPFAM" id="SSF47323">
    <property type="entry name" value="Anticodon-binding domain of a subclass of class I aminoacyl-tRNA synthetases"/>
    <property type="match status" value="1"/>
</dbReference>
<dbReference type="SUPFAM" id="SSF52374">
    <property type="entry name" value="Nucleotidylyl transferase"/>
    <property type="match status" value="1"/>
</dbReference>
<protein>
    <recommendedName>
        <fullName evidence="1">Cysteine--tRNA ligase</fullName>
        <ecNumber evidence="1">6.1.1.16</ecNumber>
    </recommendedName>
    <alternativeName>
        <fullName evidence="1">Cysteinyl-tRNA synthetase</fullName>
        <shortName evidence="1">CysRS</shortName>
    </alternativeName>
</protein>
<proteinExistence type="inferred from homology"/>
<gene>
    <name evidence="1" type="primary">cysS</name>
    <name type="ordered locus">plu3804</name>
</gene>
<evidence type="ECO:0000255" key="1">
    <source>
        <dbReference type="HAMAP-Rule" id="MF_00041"/>
    </source>
</evidence>
<comment type="catalytic activity">
    <reaction evidence="1">
        <text>tRNA(Cys) + L-cysteine + ATP = L-cysteinyl-tRNA(Cys) + AMP + diphosphate</text>
        <dbReference type="Rhea" id="RHEA:17773"/>
        <dbReference type="Rhea" id="RHEA-COMP:9661"/>
        <dbReference type="Rhea" id="RHEA-COMP:9679"/>
        <dbReference type="ChEBI" id="CHEBI:30616"/>
        <dbReference type="ChEBI" id="CHEBI:33019"/>
        <dbReference type="ChEBI" id="CHEBI:35235"/>
        <dbReference type="ChEBI" id="CHEBI:78442"/>
        <dbReference type="ChEBI" id="CHEBI:78517"/>
        <dbReference type="ChEBI" id="CHEBI:456215"/>
        <dbReference type="EC" id="6.1.1.16"/>
    </reaction>
</comment>
<comment type="cofactor">
    <cofactor evidence="1">
        <name>Zn(2+)</name>
        <dbReference type="ChEBI" id="CHEBI:29105"/>
    </cofactor>
    <text evidence="1">Binds 1 zinc ion per subunit.</text>
</comment>
<comment type="subunit">
    <text evidence="1">Monomer.</text>
</comment>
<comment type="subcellular location">
    <subcellularLocation>
        <location evidence="1">Cytoplasm</location>
    </subcellularLocation>
</comment>
<comment type="similarity">
    <text evidence="1">Belongs to the class-I aminoacyl-tRNA synthetase family.</text>
</comment>
<reference key="1">
    <citation type="journal article" date="2003" name="Nat. Biotechnol.">
        <title>The genome sequence of the entomopathogenic bacterium Photorhabdus luminescens.</title>
        <authorList>
            <person name="Duchaud E."/>
            <person name="Rusniok C."/>
            <person name="Frangeul L."/>
            <person name="Buchrieser C."/>
            <person name="Givaudan A."/>
            <person name="Taourit S."/>
            <person name="Bocs S."/>
            <person name="Boursaux-Eude C."/>
            <person name="Chandler M."/>
            <person name="Charles J.-F."/>
            <person name="Dassa E."/>
            <person name="Derose R."/>
            <person name="Derzelle S."/>
            <person name="Freyssinet G."/>
            <person name="Gaudriault S."/>
            <person name="Medigue C."/>
            <person name="Lanois A."/>
            <person name="Powell K."/>
            <person name="Siguier P."/>
            <person name="Vincent R."/>
            <person name="Wingate V."/>
            <person name="Zouine M."/>
            <person name="Glaser P."/>
            <person name="Boemare N."/>
            <person name="Danchin A."/>
            <person name="Kunst F."/>
        </authorList>
    </citation>
    <scope>NUCLEOTIDE SEQUENCE [LARGE SCALE GENOMIC DNA]</scope>
    <source>
        <strain>DSM 15139 / CIP 105565 / TT01</strain>
    </source>
</reference>
<sequence length="461" mass="52507">MLKIFNTLSRQKEEFKPIHPGKVGMYVCGITIYDLCHIGHGRTFVSFDVVARYLRYLGYDLTYVRNVTDVDDKIIKRAAENSESCDDLTGRMLAEMYKDFDALNILRPDLEPRATRHIQEIIALTESLIKRGHAYVADNGDVMFSVESDQDYGLLSRQDLSQLQAGARVEVADVKRNPMDFVLWKMSKPGEPSWESPWGAGRPGWHIECSAMNSKQLGNHFDIHGGGADLMFPHHENEIAQSTCAHDGPYVNYWMHSGMVMVDKEKMSKSLNNFFTIRDVLAYYDAETVRYFLLSGHYRSQLNYTEDNLKQARTALERFYTALRGTDASVPPAGGEIFEARFIDAMNDDFNTPEAYSVLFDMVREINRLKSEDMDAANGLAAELRKLAGILGLLQQQPEQFLHRGIQADDEEIAKIEALIKQRNDARKNKDWPLADSARNQLNEMGIELEDGPQGTSWRRK</sequence>
<organism>
    <name type="scientific">Photorhabdus laumondii subsp. laumondii (strain DSM 15139 / CIP 105565 / TT01)</name>
    <name type="common">Photorhabdus luminescens subsp. laumondii</name>
    <dbReference type="NCBI Taxonomy" id="243265"/>
    <lineage>
        <taxon>Bacteria</taxon>
        <taxon>Pseudomonadati</taxon>
        <taxon>Pseudomonadota</taxon>
        <taxon>Gammaproteobacteria</taxon>
        <taxon>Enterobacterales</taxon>
        <taxon>Morganellaceae</taxon>
        <taxon>Photorhabdus</taxon>
    </lineage>
</organism>